<dbReference type="EMBL" id="CP000970">
    <property type="protein sequence ID" value="ACB15929.1"/>
    <property type="molecule type" value="Genomic_DNA"/>
</dbReference>
<dbReference type="RefSeq" id="WP_000377114.1">
    <property type="nucleotide sequence ID" value="NC_010498.1"/>
</dbReference>
<dbReference type="SMR" id="B1LFY1"/>
<dbReference type="KEGG" id="ecm:EcSMS35_0049"/>
<dbReference type="HOGENOM" id="CLU_005126_9_3_6"/>
<dbReference type="Proteomes" id="UP000007011">
    <property type="component" value="Chromosome"/>
</dbReference>
<dbReference type="GO" id="GO:0005886">
    <property type="term" value="C:plasma membrane"/>
    <property type="evidence" value="ECO:0007669"/>
    <property type="project" value="UniProtKB-SubCell"/>
</dbReference>
<dbReference type="GO" id="GO:0019899">
    <property type="term" value="F:enzyme binding"/>
    <property type="evidence" value="ECO:0007669"/>
    <property type="project" value="InterPro"/>
</dbReference>
<dbReference type="GO" id="GO:0015503">
    <property type="term" value="F:glutathione-regulated potassium exporter activity"/>
    <property type="evidence" value="ECO:0007669"/>
    <property type="project" value="UniProtKB-UniRule"/>
</dbReference>
<dbReference type="GO" id="GO:0015643">
    <property type="term" value="F:toxic substance binding"/>
    <property type="evidence" value="ECO:0007669"/>
    <property type="project" value="InterPro"/>
</dbReference>
<dbReference type="GO" id="GO:1902600">
    <property type="term" value="P:proton transmembrane transport"/>
    <property type="evidence" value="ECO:0007669"/>
    <property type="project" value="InterPro"/>
</dbReference>
<dbReference type="GO" id="GO:0051595">
    <property type="term" value="P:response to methylglyoxal"/>
    <property type="evidence" value="ECO:0007669"/>
    <property type="project" value="InterPro"/>
</dbReference>
<dbReference type="FunFam" id="1.20.1530.20:FF:000001">
    <property type="entry name" value="Glutathione-regulated potassium-efflux system protein KefB"/>
    <property type="match status" value="1"/>
</dbReference>
<dbReference type="FunFam" id="3.40.50.720:FF:000036">
    <property type="entry name" value="Glutathione-regulated potassium-efflux system protein KefB"/>
    <property type="match status" value="1"/>
</dbReference>
<dbReference type="Gene3D" id="1.20.1530.20">
    <property type="match status" value="1"/>
</dbReference>
<dbReference type="Gene3D" id="3.40.50.720">
    <property type="entry name" value="NAD(P)-binding Rossmann-like Domain"/>
    <property type="match status" value="1"/>
</dbReference>
<dbReference type="HAMAP" id="MF_01413">
    <property type="entry name" value="K_H_efflux_KefC"/>
    <property type="match status" value="1"/>
</dbReference>
<dbReference type="InterPro" id="IPR006153">
    <property type="entry name" value="Cation/H_exchanger_TM"/>
</dbReference>
<dbReference type="InterPro" id="IPR004771">
    <property type="entry name" value="K/H_exchanger"/>
</dbReference>
<dbReference type="InterPro" id="IPR023941">
    <property type="entry name" value="K_H_efflux_KefC"/>
</dbReference>
<dbReference type="InterPro" id="IPR006036">
    <property type="entry name" value="K_uptake_TrkA"/>
</dbReference>
<dbReference type="InterPro" id="IPR038770">
    <property type="entry name" value="Na+/solute_symporter_sf"/>
</dbReference>
<dbReference type="InterPro" id="IPR036291">
    <property type="entry name" value="NAD(P)-bd_dom_sf"/>
</dbReference>
<dbReference type="InterPro" id="IPR003148">
    <property type="entry name" value="RCK_N"/>
</dbReference>
<dbReference type="NCBIfam" id="TIGR00932">
    <property type="entry name" value="2a37"/>
    <property type="match status" value="1"/>
</dbReference>
<dbReference type="NCBIfam" id="NF002924">
    <property type="entry name" value="PRK03562.1"/>
    <property type="match status" value="1"/>
</dbReference>
<dbReference type="PANTHER" id="PTHR46157:SF3">
    <property type="entry name" value="GLUTATHIONE-REGULATED POTASSIUM-EFFLUX SYSTEM PROTEIN KEFC"/>
    <property type="match status" value="1"/>
</dbReference>
<dbReference type="PANTHER" id="PTHR46157">
    <property type="entry name" value="K(+) EFFLUX ANTIPORTER 3, CHLOROPLASTIC"/>
    <property type="match status" value="1"/>
</dbReference>
<dbReference type="Pfam" id="PF00999">
    <property type="entry name" value="Na_H_Exchanger"/>
    <property type="match status" value="1"/>
</dbReference>
<dbReference type="Pfam" id="PF02254">
    <property type="entry name" value="TrkA_N"/>
    <property type="match status" value="1"/>
</dbReference>
<dbReference type="PRINTS" id="PR00335">
    <property type="entry name" value="KUPTAKETRKA"/>
</dbReference>
<dbReference type="SUPFAM" id="SSF51735">
    <property type="entry name" value="NAD(P)-binding Rossmann-fold domains"/>
    <property type="match status" value="1"/>
</dbReference>
<dbReference type="PROSITE" id="PS51201">
    <property type="entry name" value="RCK_N"/>
    <property type="match status" value="1"/>
</dbReference>
<sequence length="620" mass="67720">MDSHTLIQALIYLGSAALIVPIAVRLGLGSVLGYLIAGCIIGPWGLRLVTDAESILHFAEIGVVLMLFIIGLELDPQRLWKLRAAVFGGGALQMVICGGLLGLFCMLLGLRWQVAELIGMTLALSSTAIAMQAMNERNLMVTQMGRSAFAVLLFQDIAAIPLVAMIPLLAASSASTTMGAFALSALKVAGALVLVVLLGRYVTRPALRFVARSGLREVFSAVALFLVFGFGLLLEEVGLSMAMGAFLAGVLLASSEYRHALESDIEPFKGLLLGLFFIGVGMSIDFGTLIENPLRIVILLLGFLIIKIAMLWLIARPLQVPNKQRRWFAVLLGQGSEFAFVVFGAAQMANVLEPEWAKSLTLAVALSMAATPILLVILNRLEQSSTEEAREADEIDEEQPRVIIAGFGRFGQITGRLLLSSGVKMVVLDHDPDHIETLRKFGMKVFYGDATRMDLLESAGAAKAEVLINAIDDPQTNLQLTEMVKEHFPHLQIIARARDVDHYIRLRQAGVEKPERETFEGALKTGRLALESLGLGPYEARERADVFRRFNIQMVEEMAMVENDTKARAAVYKRTSAMLSEIITEDREHLSLIQRHGWQGTEEGKHTGNMADEPETKPSS</sequence>
<organism>
    <name type="scientific">Escherichia coli (strain SMS-3-5 / SECEC)</name>
    <dbReference type="NCBI Taxonomy" id="439855"/>
    <lineage>
        <taxon>Bacteria</taxon>
        <taxon>Pseudomonadati</taxon>
        <taxon>Pseudomonadota</taxon>
        <taxon>Gammaproteobacteria</taxon>
        <taxon>Enterobacterales</taxon>
        <taxon>Enterobacteriaceae</taxon>
        <taxon>Escherichia</taxon>
    </lineage>
</organism>
<feature type="chain" id="PRO_1000145542" description="Glutathione-regulated potassium-efflux system protein KefC">
    <location>
        <begin position="1"/>
        <end position="620"/>
    </location>
</feature>
<feature type="transmembrane region" description="Helical" evidence="1">
    <location>
        <begin position="4"/>
        <end position="24"/>
    </location>
</feature>
<feature type="transmembrane region" description="Helical" evidence="1">
    <location>
        <begin position="26"/>
        <end position="46"/>
    </location>
</feature>
<feature type="transmembrane region" description="Helical" evidence="1">
    <location>
        <begin position="54"/>
        <end position="74"/>
    </location>
</feature>
<feature type="transmembrane region" description="Helical" evidence="1">
    <location>
        <begin position="90"/>
        <end position="110"/>
    </location>
</feature>
<feature type="transmembrane region" description="Helical" evidence="1">
    <location>
        <begin position="114"/>
        <end position="134"/>
    </location>
</feature>
<feature type="transmembrane region" description="Helical" evidence="1">
    <location>
        <begin position="149"/>
        <end position="169"/>
    </location>
</feature>
<feature type="transmembrane region" description="Helical" evidence="1">
    <location>
        <begin position="178"/>
        <end position="198"/>
    </location>
</feature>
<feature type="transmembrane region" description="Helical" evidence="1">
    <location>
        <begin position="218"/>
        <end position="238"/>
    </location>
</feature>
<feature type="transmembrane region" description="Helical" evidence="1">
    <location>
        <begin position="270"/>
        <end position="290"/>
    </location>
</feature>
<feature type="transmembrane region" description="Helical" evidence="1">
    <location>
        <begin position="294"/>
        <end position="314"/>
    </location>
</feature>
<feature type="transmembrane region" description="Helical" evidence="1">
    <location>
        <begin position="327"/>
        <end position="347"/>
    </location>
</feature>
<feature type="transmembrane region" description="Helical" evidence="1">
    <location>
        <begin position="359"/>
        <end position="379"/>
    </location>
</feature>
<feature type="domain" description="RCK N-terminal" evidence="2">
    <location>
        <begin position="399"/>
        <end position="518"/>
    </location>
</feature>
<feature type="region of interest" description="Disordered" evidence="3">
    <location>
        <begin position="597"/>
        <end position="620"/>
    </location>
</feature>
<accession>B1LFY1</accession>
<evidence type="ECO:0000255" key="1">
    <source>
        <dbReference type="HAMAP-Rule" id="MF_01413"/>
    </source>
</evidence>
<evidence type="ECO:0000255" key="2">
    <source>
        <dbReference type="PROSITE-ProRule" id="PRU00543"/>
    </source>
</evidence>
<evidence type="ECO:0000256" key="3">
    <source>
        <dbReference type="SAM" id="MobiDB-lite"/>
    </source>
</evidence>
<gene>
    <name evidence="1" type="primary">kefC</name>
    <name type="ordered locus">EcSMS35_0049</name>
</gene>
<name>KEFC_ECOSM</name>
<keyword id="KW-0050">Antiport</keyword>
<keyword id="KW-0997">Cell inner membrane</keyword>
<keyword id="KW-1003">Cell membrane</keyword>
<keyword id="KW-0406">Ion transport</keyword>
<keyword id="KW-0472">Membrane</keyword>
<keyword id="KW-0630">Potassium</keyword>
<keyword id="KW-0633">Potassium transport</keyword>
<keyword id="KW-0812">Transmembrane</keyword>
<keyword id="KW-1133">Transmembrane helix</keyword>
<keyword id="KW-0813">Transport</keyword>
<proteinExistence type="inferred from homology"/>
<comment type="function">
    <text evidence="1">Pore-forming subunit of a potassium efflux system that confers protection against electrophiles. Catalyzes K(+)/H(+) antiport.</text>
</comment>
<comment type="subunit">
    <text evidence="1">Homodimer. Interacts with the regulatory subunit KefF.</text>
</comment>
<comment type="subcellular location">
    <subcellularLocation>
        <location evidence="1">Cell inner membrane</location>
        <topology evidence="1">Multi-pass membrane protein</topology>
    </subcellularLocation>
</comment>
<comment type="similarity">
    <text evidence="1">Belongs to the monovalent cation:proton antiporter 2 (CPA2) transporter (TC 2.A.37) family. KefC subfamily.</text>
</comment>
<reference key="1">
    <citation type="journal article" date="2008" name="J. Bacteriol.">
        <title>Insights into the environmental resistance gene pool from the genome sequence of the multidrug-resistant environmental isolate Escherichia coli SMS-3-5.</title>
        <authorList>
            <person name="Fricke W.F."/>
            <person name="Wright M.S."/>
            <person name="Lindell A.H."/>
            <person name="Harkins D.M."/>
            <person name="Baker-Austin C."/>
            <person name="Ravel J."/>
            <person name="Stepanauskas R."/>
        </authorList>
    </citation>
    <scope>NUCLEOTIDE SEQUENCE [LARGE SCALE GENOMIC DNA]</scope>
    <source>
        <strain>SMS-3-5 / SECEC</strain>
    </source>
</reference>
<protein>
    <recommendedName>
        <fullName evidence="1">Glutathione-regulated potassium-efflux system protein KefC</fullName>
    </recommendedName>
    <alternativeName>
        <fullName evidence="1">K(+)/H(+) antiporter</fullName>
    </alternativeName>
</protein>